<sequence length="160" mass="17964">MMEQSLIPQTPVLPLTAQRTVKRALTLLDRHLRETGVAFTSTQAARDWLKLKMAGLEREEFMMLYLNQQNQLIAHETLFAGSISSTEVHPREVVKRALYFNAAAVILAHNHPSGDTTPSQADKTITQRLVQALQLVDIRVPDHLIVGGRQIYSFAEHGLL</sequence>
<reference key="1">
    <citation type="journal article" date="1997" name="DNA Res.">
        <title>Construction of a contiguous 874-kb sequence of the Escherichia coli-K12 genome corresponding to 50.0-68.8 min on the linkage map and analysis of its sequence features.</title>
        <authorList>
            <person name="Yamamoto Y."/>
            <person name="Aiba H."/>
            <person name="Baba T."/>
            <person name="Hayashi K."/>
            <person name="Inada T."/>
            <person name="Isono K."/>
            <person name="Itoh T."/>
            <person name="Kimura S."/>
            <person name="Kitagawa M."/>
            <person name="Makino K."/>
            <person name="Miki T."/>
            <person name="Mitsuhashi N."/>
            <person name="Mizobuchi K."/>
            <person name="Mori H."/>
            <person name="Nakade S."/>
            <person name="Nakamura Y."/>
            <person name="Nashimoto H."/>
            <person name="Oshima T."/>
            <person name="Oyama S."/>
            <person name="Saito N."/>
            <person name="Sampei G."/>
            <person name="Satoh Y."/>
            <person name="Sivasundaram S."/>
            <person name="Tagami H."/>
            <person name="Takahashi H."/>
            <person name="Takeda J."/>
            <person name="Takemoto K."/>
            <person name="Uehara K."/>
            <person name="Wada C."/>
            <person name="Yamagata S."/>
            <person name="Horiuchi T."/>
        </authorList>
    </citation>
    <scope>NUCLEOTIDE SEQUENCE [LARGE SCALE GENOMIC DNA]</scope>
    <source>
        <strain>K12 / W3110 / ATCC 27325 / DSM 5911</strain>
    </source>
</reference>
<reference key="2">
    <citation type="journal article" date="1997" name="Science">
        <title>The complete genome sequence of Escherichia coli K-12.</title>
        <authorList>
            <person name="Blattner F.R."/>
            <person name="Plunkett G. III"/>
            <person name="Bloch C.A."/>
            <person name="Perna N.T."/>
            <person name="Burland V."/>
            <person name="Riley M."/>
            <person name="Collado-Vides J."/>
            <person name="Glasner J.D."/>
            <person name="Rode C.K."/>
            <person name="Mayhew G.F."/>
            <person name="Gregor J."/>
            <person name="Davis N.W."/>
            <person name="Kirkpatrick H.A."/>
            <person name="Goeden M.A."/>
            <person name="Rose D.J."/>
            <person name="Mau B."/>
            <person name="Shao Y."/>
        </authorList>
    </citation>
    <scope>NUCLEOTIDE SEQUENCE [LARGE SCALE GENOMIC DNA]</scope>
    <source>
        <strain>K12 / MG1655 / ATCC 47076</strain>
    </source>
</reference>
<reference key="3">
    <citation type="journal article" date="2006" name="Mol. Syst. Biol.">
        <title>Highly accurate genome sequences of Escherichia coli K-12 strains MG1655 and W3110.</title>
        <authorList>
            <person name="Hayashi K."/>
            <person name="Morooka N."/>
            <person name="Yamamoto Y."/>
            <person name="Fujita K."/>
            <person name="Isono K."/>
            <person name="Choi S."/>
            <person name="Ohtsubo E."/>
            <person name="Baba T."/>
            <person name="Wanner B.L."/>
            <person name="Mori H."/>
            <person name="Horiuchi T."/>
        </authorList>
    </citation>
    <scope>NUCLEOTIDE SEQUENCE [LARGE SCALE GENOMIC DNA]</scope>
    <source>
        <strain>K12 / W3110 / ATCC 27325 / DSM 5911</strain>
    </source>
</reference>
<accession>P52140</accession>
<dbReference type="EMBL" id="U36840">
    <property type="protein sequence ID" value="AAA79812.1"/>
    <property type="molecule type" value="Genomic_DNA"/>
</dbReference>
<dbReference type="EMBL" id="U00096">
    <property type="protein sequence ID" value="AAC75692.1"/>
    <property type="molecule type" value="Genomic_DNA"/>
</dbReference>
<dbReference type="EMBL" id="AP009048">
    <property type="protein sequence ID" value="BAA16512.1"/>
    <property type="molecule type" value="Genomic_DNA"/>
</dbReference>
<dbReference type="PIR" id="T08655">
    <property type="entry name" value="T08655"/>
</dbReference>
<dbReference type="RefSeq" id="NP_417131.1">
    <property type="nucleotide sequence ID" value="NC_000913.3"/>
</dbReference>
<dbReference type="RefSeq" id="WP_001407480.1">
    <property type="nucleotide sequence ID" value="NZ_LN832404.1"/>
</dbReference>
<dbReference type="SMR" id="P52140"/>
<dbReference type="BioGRID" id="4259214">
    <property type="interactions" value="6"/>
</dbReference>
<dbReference type="FunCoup" id="P52140">
    <property type="interactions" value="83"/>
</dbReference>
<dbReference type="IntAct" id="P52140">
    <property type="interactions" value="6"/>
</dbReference>
<dbReference type="STRING" id="511145.b2644"/>
<dbReference type="PaxDb" id="511145-b2644"/>
<dbReference type="EnsemblBacteria" id="AAC75692">
    <property type="protein sequence ID" value="AAC75692"/>
    <property type="gene ID" value="b2644"/>
</dbReference>
<dbReference type="GeneID" id="947125"/>
<dbReference type="KEGG" id="ecj:JW2625"/>
<dbReference type="KEGG" id="eco:b2644"/>
<dbReference type="KEGG" id="ecoc:C3026_14610"/>
<dbReference type="PATRIC" id="fig|1411691.4.peg.4095"/>
<dbReference type="EchoBASE" id="EB3003"/>
<dbReference type="eggNOG" id="COG2003">
    <property type="taxonomic scope" value="Bacteria"/>
</dbReference>
<dbReference type="HOGENOM" id="CLU_073529_3_1_6"/>
<dbReference type="InParanoid" id="P52140"/>
<dbReference type="OMA" id="ISHTEVH"/>
<dbReference type="OrthoDB" id="9804482at2"/>
<dbReference type="PhylomeDB" id="P52140"/>
<dbReference type="BioCyc" id="EcoCyc:G7379-MONOMER"/>
<dbReference type="PRO" id="PR:P52140"/>
<dbReference type="Proteomes" id="UP000000625">
    <property type="component" value="Chromosome"/>
</dbReference>
<dbReference type="GO" id="GO:0046872">
    <property type="term" value="F:metal ion binding"/>
    <property type="evidence" value="ECO:0007669"/>
    <property type="project" value="UniProtKB-KW"/>
</dbReference>
<dbReference type="GO" id="GO:0008237">
    <property type="term" value="F:metallopeptidase activity"/>
    <property type="evidence" value="ECO:0007669"/>
    <property type="project" value="UniProtKB-KW"/>
</dbReference>
<dbReference type="GO" id="GO:0034605">
    <property type="term" value="P:cellular response to heat"/>
    <property type="evidence" value="ECO:0000314"/>
    <property type="project" value="EcoCyc"/>
</dbReference>
<dbReference type="GO" id="GO:0034614">
    <property type="term" value="P:cellular response to reactive oxygen species"/>
    <property type="evidence" value="ECO:0000314"/>
    <property type="project" value="EcoCyc"/>
</dbReference>
<dbReference type="GO" id="GO:1990451">
    <property type="term" value="P:cellular stress response to acidic pH"/>
    <property type="evidence" value="ECO:0000314"/>
    <property type="project" value="EcoCyc"/>
</dbReference>
<dbReference type="GO" id="GO:0006508">
    <property type="term" value="P:proteolysis"/>
    <property type="evidence" value="ECO:0007669"/>
    <property type="project" value="UniProtKB-KW"/>
</dbReference>
<dbReference type="CDD" id="cd08071">
    <property type="entry name" value="MPN_DUF2466"/>
    <property type="match status" value="1"/>
</dbReference>
<dbReference type="Gene3D" id="3.40.140.10">
    <property type="entry name" value="Cytidine Deaminase, domain 2"/>
    <property type="match status" value="1"/>
</dbReference>
<dbReference type="InterPro" id="IPR037518">
    <property type="entry name" value="MPN"/>
</dbReference>
<dbReference type="InterPro" id="IPR025657">
    <property type="entry name" value="RadC_JAB"/>
</dbReference>
<dbReference type="InterPro" id="IPR001405">
    <property type="entry name" value="UPF0758"/>
</dbReference>
<dbReference type="InterPro" id="IPR020891">
    <property type="entry name" value="UPF0758_CS"/>
</dbReference>
<dbReference type="NCBIfam" id="TIGR00608">
    <property type="entry name" value="radc"/>
    <property type="match status" value="1"/>
</dbReference>
<dbReference type="PANTHER" id="PTHR30471">
    <property type="entry name" value="DNA REPAIR PROTEIN RADC"/>
    <property type="match status" value="1"/>
</dbReference>
<dbReference type="PANTHER" id="PTHR30471:SF3">
    <property type="entry name" value="UPF0758 PROTEIN YEES-RELATED"/>
    <property type="match status" value="1"/>
</dbReference>
<dbReference type="Pfam" id="PF04002">
    <property type="entry name" value="RadC"/>
    <property type="match status" value="1"/>
</dbReference>
<dbReference type="PROSITE" id="PS50249">
    <property type="entry name" value="MPN"/>
    <property type="match status" value="1"/>
</dbReference>
<dbReference type="PROSITE" id="PS01302">
    <property type="entry name" value="UPF0758"/>
    <property type="match status" value="1"/>
</dbReference>
<organism>
    <name type="scientific">Escherichia coli (strain K12)</name>
    <dbReference type="NCBI Taxonomy" id="83333"/>
    <lineage>
        <taxon>Bacteria</taxon>
        <taxon>Pseudomonadati</taxon>
        <taxon>Pseudomonadota</taxon>
        <taxon>Gammaproteobacteria</taxon>
        <taxon>Enterobacterales</taxon>
        <taxon>Enterobacteriaceae</taxon>
        <taxon>Escherichia</taxon>
    </lineage>
</organism>
<evidence type="ECO:0000255" key="1">
    <source>
        <dbReference type="PROSITE-ProRule" id="PRU01182"/>
    </source>
</evidence>
<evidence type="ECO:0000305" key="2"/>
<protein>
    <recommendedName>
        <fullName>UPF0758 protein YfjY</fullName>
    </recommendedName>
</protein>
<keyword id="KW-0378">Hydrolase</keyword>
<keyword id="KW-0479">Metal-binding</keyword>
<keyword id="KW-0482">Metalloprotease</keyword>
<keyword id="KW-0645">Protease</keyword>
<keyword id="KW-1185">Reference proteome</keyword>
<keyword id="KW-0862">Zinc</keyword>
<feature type="chain" id="PRO_0000190763" description="UPF0758 protein YfjY">
    <location>
        <begin position="1"/>
        <end position="160"/>
    </location>
</feature>
<feature type="domain" description="MPN" evidence="1">
    <location>
        <begin position="38"/>
        <end position="160"/>
    </location>
</feature>
<feature type="short sequence motif" description="JAMM motif" evidence="1">
    <location>
        <begin position="109"/>
        <end position="122"/>
    </location>
</feature>
<feature type="binding site" evidence="1">
    <location>
        <position position="109"/>
    </location>
    <ligand>
        <name>Zn(2+)</name>
        <dbReference type="ChEBI" id="CHEBI:29105"/>
        <note>catalytic</note>
    </ligand>
</feature>
<feature type="binding site" evidence="1">
    <location>
        <position position="111"/>
    </location>
    <ligand>
        <name>Zn(2+)</name>
        <dbReference type="ChEBI" id="CHEBI:29105"/>
        <note>catalytic</note>
    </ligand>
</feature>
<feature type="binding site" evidence="1">
    <location>
        <position position="122"/>
    </location>
    <ligand>
        <name>Zn(2+)</name>
        <dbReference type="ChEBI" id="CHEBI:29105"/>
        <note>catalytic</note>
    </ligand>
</feature>
<comment type="similarity">
    <text evidence="2">Belongs to the UPF0758 family.</text>
</comment>
<name>YFJY_ECOLI</name>
<gene>
    <name type="primary">yfjY</name>
    <name type="ordered locus">b2644</name>
    <name type="ordered locus">JW2625</name>
</gene>
<proteinExistence type="inferred from homology"/>